<name>SAHH_ACIAD</name>
<proteinExistence type="inferred from homology"/>
<gene>
    <name evidence="1" type="primary">ahcY</name>
    <name type="ordered locus">ACIAD2282</name>
</gene>
<keyword id="KW-0963">Cytoplasm</keyword>
<keyword id="KW-0378">Hydrolase</keyword>
<keyword id="KW-0520">NAD</keyword>
<keyword id="KW-0554">One-carbon metabolism</keyword>
<evidence type="ECO:0000255" key="1">
    <source>
        <dbReference type="HAMAP-Rule" id="MF_00563"/>
    </source>
</evidence>
<sequence length="467" mass="51370">MFFKEIVMNAVNASFTDYKVADISLADYGRKEIKLAEAEMPALIGLRKRYAAEKPLAGAKILGCIHMTIQTAVLIETLVELGAEVRWTSCNIFSTQDHAAAAIAASGVPVFAWKGETEEEYNWCLEQQINVNGKPWDANMILDDGGDLTALVHEKYPTLLDHIHGITEETTTGVQRLLEMWKDGSLKVPAINVNDSVTKSKNDNKYGCRHSLNDAIKRATDMLLSGRRALVIGYGDVGKGSAQSLRQEGMIVRVTEVDPICAMQACMDGYEVVSPYKNGVQTGKKEDINLDLLKNTDLIVTTTGNYHVCDSAMLDTLKAGAVVCNIGHFDTEIDTNYLRGYKWVEVKPQVHQVYRSENENDYLILLSEGRLVNLGNATGHPSRVMDGSFANQVLGQIHLFQEKFADLPASEKAAQIRVEVLPKKLDEEVAAAMVLGFGGVLTQLTSVQADYLGVPVEGPFKSDAYKY</sequence>
<protein>
    <recommendedName>
        <fullName evidence="1">Adenosylhomocysteinase</fullName>
        <ecNumber evidence="1">3.13.2.1</ecNumber>
    </recommendedName>
    <alternativeName>
        <fullName evidence="1">S-adenosyl-L-homocysteine hydrolase</fullName>
        <shortName evidence="1">AdoHcyase</shortName>
    </alternativeName>
</protein>
<feature type="chain" id="PRO_0000116938" description="Adenosylhomocysteinase">
    <location>
        <begin position="1"/>
        <end position="467"/>
    </location>
</feature>
<feature type="binding site" evidence="1">
    <location>
        <position position="68"/>
    </location>
    <ligand>
        <name>substrate</name>
    </ligand>
</feature>
<feature type="binding site" evidence="1">
    <location>
        <position position="144"/>
    </location>
    <ligand>
        <name>substrate</name>
    </ligand>
</feature>
<feature type="binding site" evidence="1">
    <location>
        <position position="169"/>
    </location>
    <ligand>
        <name>substrate</name>
    </ligand>
</feature>
<feature type="binding site" evidence="1">
    <location>
        <begin position="170"/>
        <end position="172"/>
    </location>
    <ligand>
        <name>NAD(+)</name>
        <dbReference type="ChEBI" id="CHEBI:57540"/>
    </ligand>
</feature>
<feature type="binding site" evidence="1">
    <location>
        <position position="199"/>
    </location>
    <ligand>
        <name>substrate</name>
    </ligand>
</feature>
<feature type="binding site" evidence="1">
    <location>
        <position position="203"/>
    </location>
    <ligand>
        <name>substrate</name>
    </ligand>
</feature>
<feature type="binding site" evidence="1">
    <location>
        <position position="204"/>
    </location>
    <ligand>
        <name>NAD(+)</name>
        <dbReference type="ChEBI" id="CHEBI:57540"/>
    </ligand>
</feature>
<feature type="binding site" evidence="1">
    <location>
        <begin position="233"/>
        <end position="238"/>
    </location>
    <ligand>
        <name>NAD(+)</name>
        <dbReference type="ChEBI" id="CHEBI:57540"/>
    </ligand>
</feature>
<feature type="binding site" evidence="1">
    <location>
        <position position="256"/>
    </location>
    <ligand>
        <name>NAD(+)</name>
        <dbReference type="ChEBI" id="CHEBI:57540"/>
    </ligand>
</feature>
<feature type="binding site" evidence="1">
    <location>
        <position position="305"/>
    </location>
    <ligand>
        <name>NAD(+)</name>
        <dbReference type="ChEBI" id="CHEBI:57540"/>
    </ligand>
</feature>
<feature type="binding site" evidence="1">
    <location>
        <begin position="326"/>
        <end position="328"/>
    </location>
    <ligand>
        <name>NAD(+)</name>
        <dbReference type="ChEBI" id="CHEBI:57540"/>
    </ligand>
</feature>
<feature type="binding site" evidence="1">
    <location>
        <position position="373"/>
    </location>
    <ligand>
        <name>NAD(+)</name>
        <dbReference type="ChEBI" id="CHEBI:57540"/>
    </ligand>
</feature>
<reference key="1">
    <citation type="journal article" date="2004" name="Nucleic Acids Res.">
        <title>Unique features revealed by the genome sequence of Acinetobacter sp. ADP1, a versatile and naturally transformation competent bacterium.</title>
        <authorList>
            <person name="Barbe V."/>
            <person name="Vallenet D."/>
            <person name="Fonknechten N."/>
            <person name="Kreimeyer A."/>
            <person name="Oztas S."/>
            <person name="Labarre L."/>
            <person name="Cruveiller S."/>
            <person name="Robert C."/>
            <person name="Duprat S."/>
            <person name="Wincker P."/>
            <person name="Ornston L.N."/>
            <person name="Weissenbach J."/>
            <person name="Marliere P."/>
            <person name="Cohen G.N."/>
            <person name="Medigue C."/>
        </authorList>
    </citation>
    <scope>NUCLEOTIDE SEQUENCE [LARGE SCALE GENOMIC DNA]</scope>
    <source>
        <strain>ATCC 33305 / BD413 / ADP1</strain>
    </source>
</reference>
<accession>Q6FA43</accession>
<comment type="function">
    <text evidence="1">May play a key role in the regulation of the intracellular concentration of adenosylhomocysteine.</text>
</comment>
<comment type="catalytic activity">
    <reaction evidence="1">
        <text>S-adenosyl-L-homocysteine + H2O = L-homocysteine + adenosine</text>
        <dbReference type="Rhea" id="RHEA:21708"/>
        <dbReference type="ChEBI" id="CHEBI:15377"/>
        <dbReference type="ChEBI" id="CHEBI:16335"/>
        <dbReference type="ChEBI" id="CHEBI:57856"/>
        <dbReference type="ChEBI" id="CHEBI:58199"/>
        <dbReference type="EC" id="3.13.2.1"/>
    </reaction>
</comment>
<comment type="cofactor">
    <cofactor evidence="1">
        <name>NAD(+)</name>
        <dbReference type="ChEBI" id="CHEBI:57540"/>
    </cofactor>
    <text evidence="1">Binds 1 NAD(+) per subunit.</text>
</comment>
<comment type="pathway">
    <text evidence="1">Amino-acid biosynthesis; L-homocysteine biosynthesis; L-homocysteine from S-adenosyl-L-homocysteine: step 1/1.</text>
</comment>
<comment type="subcellular location">
    <subcellularLocation>
        <location evidence="1">Cytoplasm</location>
    </subcellularLocation>
</comment>
<comment type="similarity">
    <text evidence="1">Belongs to the adenosylhomocysteinase family.</text>
</comment>
<organism>
    <name type="scientific">Acinetobacter baylyi (strain ATCC 33305 / BD413 / ADP1)</name>
    <dbReference type="NCBI Taxonomy" id="62977"/>
    <lineage>
        <taxon>Bacteria</taxon>
        <taxon>Pseudomonadati</taxon>
        <taxon>Pseudomonadota</taxon>
        <taxon>Gammaproteobacteria</taxon>
        <taxon>Moraxellales</taxon>
        <taxon>Moraxellaceae</taxon>
        <taxon>Acinetobacter</taxon>
    </lineage>
</organism>
<dbReference type="EC" id="3.13.2.1" evidence="1"/>
<dbReference type="EMBL" id="CR543861">
    <property type="protein sequence ID" value="CAG69070.1"/>
    <property type="molecule type" value="Genomic_DNA"/>
</dbReference>
<dbReference type="SMR" id="Q6FA43"/>
<dbReference type="STRING" id="202950.GCA_001485005_00118"/>
<dbReference type="KEGG" id="aci:ACIAD2282"/>
<dbReference type="eggNOG" id="COG0499">
    <property type="taxonomic scope" value="Bacteria"/>
</dbReference>
<dbReference type="HOGENOM" id="CLU_025194_2_1_6"/>
<dbReference type="UniPathway" id="UPA00314">
    <property type="reaction ID" value="UER00076"/>
</dbReference>
<dbReference type="Proteomes" id="UP000000430">
    <property type="component" value="Chromosome"/>
</dbReference>
<dbReference type="GO" id="GO:0005829">
    <property type="term" value="C:cytosol"/>
    <property type="evidence" value="ECO:0007669"/>
    <property type="project" value="TreeGrafter"/>
</dbReference>
<dbReference type="GO" id="GO:0004013">
    <property type="term" value="F:adenosylhomocysteinase activity"/>
    <property type="evidence" value="ECO:0007669"/>
    <property type="project" value="UniProtKB-UniRule"/>
</dbReference>
<dbReference type="GO" id="GO:0071269">
    <property type="term" value="P:L-homocysteine biosynthetic process"/>
    <property type="evidence" value="ECO:0007669"/>
    <property type="project" value="UniProtKB-UniRule"/>
</dbReference>
<dbReference type="GO" id="GO:0006730">
    <property type="term" value="P:one-carbon metabolic process"/>
    <property type="evidence" value="ECO:0007669"/>
    <property type="project" value="UniProtKB-KW"/>
</dbReference>
<dbReference type="GO" id="GO:0033353">
    <property type="term" value="P:S-adenosylmethionine cycle"/>
    <property type="evidence" value="ECO:0007669"/>
    <property type="project" value="TreeGrafter"/>
</dbReference>
<dbReference type="CDD" id="cd00401">
    <property type="entry name" value="SAHH"/>
    <property type="match status" value="1"/>
</dbReference>
<dbReference type="FunFam" id="3.40.50.1480:FF:000006">
    <property type="entry name" value="Adenosylhomocysteinase"/>
    <property type="match status" value="1"/>
</dbReference>
<dbReference type="FunFam" id="3.40.50.1480:FF:000007">
    <property type="entry name" value="Adenosylhomocysteinase"/>
    <property type="match status" value="1"/>
</dbReference>
<dbReference type="Gene3D" id="3.40.50.1480">
    <property type="entry name" value="Adenosylhomocysteinase-like"/>
    <property type="match status" value="1"/>
</dbReference>
<dbReference type="Gene3D" id="3.40.50.720">
    <property type="entry name" value="NAD(P)-binding Rossmann-like Domain"/>
    <property type="match status" value="1"/>
</dbReference>
<dbReference type="HAMAP" id="MF_00563">
    <property type="entry name" value="AdoHcyase"/>
    <property type="match status" value="1"/>
</dbReference>
<dbReference type="InterPro" id="IPR042172">
    <property type="entry name" value="Adenosylhomocyst_ase-like_sf"/>
</dbReference>
<dbReference type="InterPro" id="IPR000043">
    <property type="entry name" value="Adenosylhomocysteinase-like"/>
</dbReference>
<dbReference type="InterPro" id="IPR015878">
    <property type="entry name" value="Ado_hCys_hydrolase_NAD-bd"/>
</dbReference>
<dbReference type="InterPro" id="IPR036291">
    <property type="entry name" value="NAD(P)-bd_dom_sf"/>
</dbReference>
<dbReference type="InterPro" id="IPR020082">
    <property type="entry name" value="S-Ado-L-homoCys_hydrolase_CS"/>
</dbReference>
<dbReference type="NCBIfam" id="TIGR00936">
    <property type="entry name" value="ahcY"/>
    <property type="match status" value="1"/>
</dbReference>
<dbReference type="NCBIfam" id="NF004005">
    <property type="entry name" value="PRK05476.2-3"/>
    <property type="match status" value="1"/>
</dbReference>
<dbReference type="PANTHER" id="PTHR23420">
    <property type="entry name" value="ADENOSYLHOMOCYSTEINASE"/>
    <property type="match status" value="1"/>
</dbReference>
<dbReference type="PANTHER" id="PTHR23420:SF0">
    <property type="entry name" value="ADENOSYLHOMOCYSTEINASE"/>
    <property type="match status" value="1"/>
</dbReference>
<dbReference type="Pfam" id="PF05221">
    <property type="entry name" value="AdoHcyase"/>
    <property type="match status" value="1"/>
</dbReference>
<dbReference type="Pfam" id="PF00670">
    <property type="entry name" value="AdoHcyase_NAD"/>
    <property type="match status" value="1"/>
</dbReference>
<dbReference type="PIRSF" id="PIRSF001109">
    <property type="entry name" value="Ad_hcy_hydrolase"/>
    <property type="match status" value="1"/>
</dbReference>
<dbReference type="SMART" id="SM00996">
    <property type="entry name" value="AdoHcyase"/>
    <property type="match status" value="1"/>
</dbReference>
<dbReference type="SMART" id="SM00997">
    <property type="entry name" value="AdoHcyase_NAD"/>
    <property type="match status" value="1"/>
</dbReference>
<dbReference type="SUPFAM" id="SSF52283">
    <property type="entry name" value="Formate/glycerate dehydrogenase catalytic domain-like"/>
    <property type="match status" value="1"/>
</dbReference>
<dbReference type="SUPFAM" id="SSF51735">
    <property type="entry name" value="NAD(P)-binding Rossmann-fold domains"/>
    <property type="match status" value="1"/>
</dbReference>
<dbReference type="PROSITE" id="PS00738">
    <property type="entry name" value="ADOHCYASE_1"/>
    <property type="match status" value="1"/>
</dbReference>
<dbReference type="PROSITE" id="PS00739">
    <property type="entry name" value="ADOHCYASE_2"/>
    <property type="match status" value="1"/>
</dbReference>